<gene>
    <name evidence="1" type="primary">rnz</name>
    <name type="ordered locus">PputGB1_3634</name>
</gene>
<feature type="chain" id="PRO_1000088339" description="Ribonuclease Z">
    <location>
        <begin position="1"/>
        <end position="319"/>
    </location>
</feature>
<feature type="active site" description="Proton acceptor" evidence="1">
    <location>
        <position position="66"/>
    </location>
</feature>
<feature type="binding site" evidence="1">
    <location>
        <position position="62"/>
    </location>
    <ligand>
        <name>Zn(2+)</name>
        <dbReference type="ChEBI" id="CHEBI:29105"/>
        <label>1</label>
        <note>catalytic</note>
    </ligand>
</feature>
<feature type="binding site" evidence="1">
    <location>
        <position position="64"/>
    </location>
    <ligand>
        <name>Zn(2+)</name>
        <dbReference type="ChEBI" id="CHEBI:29105"/>
        <label>1</label>
        <note>catalytic</note>
    </ligand>
</feature>
<feature type="binding site" evidence="1">
    <location>
        <position position="66"/>
    </location>
    <ligand>
        <name>Zn(2+)</name>
        <dbReference type="ChEBI" id="CHEBI:29105"/>
        <label>2</label>
        <note>catalytic</note>
    </ligand>
</feature>
<feature type="binding site" evidence="1">
    <location>
        <position position="67"/>
    </location>
    <ligand>
        <name>Zn(2+)</name>
        <dbReference type="ChEBI" id="CHEBI:29105"/>
        <label>2</label>
        <note>catalytic</note>
    </ligand>
</feature>
<feature type="binding site" evidence="1">
    <location>
        <position position="139"/>
    </location>
    <ligand>
        <name>Zn(2+)</name>
        <dbReference type="ChEBI" id="CHEBI:29105"/>
        <label>1</label>
        <note>catalytic</note>
    </ligand>
</feature>
<feature type="binding site" evidence="1">
    <location>
        <position position="209"/>
    </location>
    <ligand>
        <name>Zn(2+)</name>
        <dbReference type="ChEBI" id="CHEBI:29105"/>
        <label>1</label>
        <note>catalytic</note>
    </ligand>
</feature>
<feature type="binding site" evidence="1">
    <location>
        <position position="209"/>
    </location>
    <ligand>
        <name>Zn(2+)</name>
        <dbReference type="ChEBI" id="CHEBI:29105"/>
        <label>2</label>
        <note>catalytic</note>
    </ligand>
</feature>
<feature type="binding site" evidence="1">
    <location>
        <position position="268"/>
    </location>
    <ligand>
        <name>Zn(2+)</name>
        <dbReference type="ChEBI" id="CHEBI:29105"/>
        <label>2</label>
        <note>catalytic</note>
    </ligand>
</feature>
<proteinExistence type="inferred from homology"/>
<protein>
    <recommendedName>
        <fullName evidence="1">Ribonuclease Z</fullName>
        <shortName evidence="1">RNase Z</shortName>
        <ecNumber evidence="1">3.1.26.11</ecNumber>
    </recommendedName>
    <alternativeName>
        <fullName evidence="1">tRNA 3 endonuclease</fullName>
    </alternativeName>
    <alternativeName>
        <fullName evidence="1">tRNase Z</fullName>
    </alternativeName>
</protein>
<organism>
    <name type="scientific">Pseudomonas putida (strain GB-1)</name>
    <dbReference type="NCBI Taxonomy" id="76869"/>
    <lineage>
        <taxon>Bacteria</taxon>
        <taxon>Pseudomonadati</taxon>
        <taxon>Pseudomonadota</taxon>
        <taxon>Gammaproteobacteria</taxon>
        <taxon>Pseudomonadales</taxon>
        <taxon>Pseudomonadaceae</taxon>
        <taxon>Pseudomonas</taxon>
    </lineage>
</organism>
<comment type="function">
    <text evidence="1">Zinc phosphodiesterase, which displays some tRNA 3'-processing endonuclease activity. Probably involved in tRNA maturation, by removing a 3'-trailer from precursor tRNA.</text>
</comment>
<comment type="catalytic activity">
    <reaction evidence="1">
        <text>Endonucleolytic cleavage of RNA, removing extra 3' nucleotides from tRNA precursor, generating 3' termini of tRNAs. A 3'-hydroxy group is left at the tRNA terminus and a 5'-phosphoryl group is left at the trailer molecule.</text>
        <dbReference type="EC" id="3.1.26.11"/>
    </reaction>
</comment>
<comment type="cofactor">
    <cofactor evidence="1">
        <name>Zn(2+)</name>
        <dbReference type="ChEBI" id="CHEBI:29105"/>
    </cofactor>
    <text evidence="1">Binds 2 Zn(2+) ions.</text>
</comment>
<comment type="subunit">
    <text evidence="1">Homodimer.</text>
</comment>
<comment type="similarity">
    <text evidence="1">Belongs to the RNase Z family.</text>
</comment>
<sequence length="319" mass="34934">MDLLFLGTSAGVPTKARNVSATAVIETNGSHWYLVDCGEGTQHRLLHTPLSIRDLRAIFITHVHGDHCFGLPGLLASAGMSGRTQPLELILPVALHDWVRQGLVASDTFLPFELRLLAVEELAEWRNEALQVTTVQLSHRVPSVGFVFTELNPEPRLDTQRLQAEGIPRGPLWGELAKGLTVQHDGQLLDGHDYLRPSRPPRRVIVCGDNDNPELLADVAKGADVLVHEATFTQAVVERTGVTFGHSTAAAVARFAEGAGVRNLVLTHFSARYQSDPRRSPNIDNVRDEALAHYSGQLTLAQDLQRYHLGRDGCLEPVG</sequence>
<reference key="1">
    <citation type="submission" date="2008-01" db="EMBL/GenBank/DDBJ databases">
        <title>Complete sequence of Pseudomonas putida GB-1.</title>
        <authorList>
            <consortium name="US DOE Joint Genome Institute"/>
            <person name="Copeland A."/>
            <person name="Lucas S."/>
            <person name="Lapidus A."/>
            <person name="Barry K."/>
            <person name="Glavina del Rio T."/>
            <person name="Dalin E."/>
            <person name="Tice H."/>
            <person name="Pitluck S."/>
            <person name="Bruce D."/>
            <person name="Goodwin L."/>
            <person name="Chertkov O."/>
            <person name="Brettin T."/>
            <person name="Detter J.C."/>
            <person name="Han C."/>
            <person name="Kuske C.R."/>
            <person name="Schmutz J."/>
            <person name="Larimer F."/>
            <person name="Land M."/>
            <person name="Hauser L."/>
            <person name="Kyrpides N."/>
            <person name="Kim E."/>
            <person name="McCarthy J.K."/>
            <person name="Richardson P."/>
        </authorList>
    </citation>
    <scope>NUCLEOTIDE SEQUENCE [LARGE SCALE GENOMIC DNA]</scope>
    <source>
        <strain>GB-1</strain>
    </source>
</reference>
<keyword id="KW-0255">Endonuclease</keyword>
<keyword id="KW-0378">Hydrolase</keyword>
<keyword id="KW-0479">Metal-binding</keyword>
<keyword id="KW-0540">Nuclease</keyword>
<keyword id="KW-0819">tRNA processing</keyword>
<keyword id="KW-0862">Zinc</keyword>
<accession>B0KMS1</accession>
<evidence type="ECO:0000255" key="1">
    <source>
        <dbReference type="HAMAP-Rule" id="MF_01818"/>
    </source>
</evidence>
<name>RNZ_PSEPG</name>
<dbReference type="EC" id="3.1.26.11" evidence="1"/>
<dbReference type="EMBL" id="CP000926">
    <property type="protein sequence ID" value="ABY99525.1"/>
    <property type="molecule type" value="Genomic_DNA"/>
</dbReference>
<dbReference type="RefSeq" id="WP_012273236.1">
    <property type="nucleotide sequence ID" value="NC_010322.1"/>
</dbReference>
<dbReference type="SMR" id="B0KMS1"/>
<dbReference type="KEGG" id="ppg:PputGB1_3634"/>
<dbReference type="eggNOG" id="COG1234">
    <property type="taxonomic scope" value="Bacteria"/>
</dbReference>
<dbReference type="HOGENOM" id="CLU_031317_2_0_6"/>
<dbReference type="Proteomes" id="UP000002157">
    <property type="component" value="Chromosome"/>
</dbReference>
<dbReference type="GO" id="GO:0042781">
    <property type="term" value="F:3'-tRNA processing endoribonuclease activity"/>
    <property type="evidence" value="ECO:0007669"/>
    <property type="project" value="UniProtKB-UniRule"/>
</dbReference>
<dbReference type="GO" id="GO:0008270">
    <property type="term" value="F:zinc ion binding"/>
    <property type="evidence" value="ECO:0007669"/>
    <property type="project" value="UniProtKB-UniRule"/>
</dbReference>
<dbReference type="CDD" id="cd07717">
    <property type="entry name" value="RNaseZ_ZiPD-like_MBL-fold"/>
    <property type="match status" value="1"/>
</dbReference>
<dbReference type="Gene3D" id="3.60.15.10">
    <property type="entry name" value="Ribonuclease Z/Hydroxyacylglutathione hydrolase-like"/>
    <property type="match status" value="1"/>
</dbReference>
<dbReference type="HAMAP" id="MF_01818">
    <property type="entry name" value="RNase_Z_BN"/>
    <property type="match status" value="1"/>
</dbReference>
<dbReference type="InterPro" id="IPR001279">
    <property type="entry name" value="Metallo-B-lactamas"/>
</dbReference>
<dbReference type="InterPro" id="IPR036866">
    <property type="entry name" value="RibonucZ/Hydroxyglut_hydro"/>
</dbReference>
<dbReference type="InterPro" id="IPR013471">
    <property type="entry name" value="RNase_Z/BN"/>
</dbReference>
<dbReference type="PANTHER" id="PTHR46018">
    <property type="entry name" value="ZINC PHOSPHODIESTERASE ELAC PROTEIN 1"/>
    <property type="match status" value="1"/>
</dbReference>
<dbReference type="PANTHER" id="PTHR46018:SF2">
    <property type="entry name" value="ZINC PHOSPHODIESTERASE ELAC PROTEIN 1"/>
    <property type="match status" value="1"/>
</dbReference>
<dbReference type="Pfam" id="PF12706">
    <property type="entry name" value="Lactamase_B_2"/>
    <property type="match status" value="1"/>
</dbReference>
<dbReference type="SUPFAM" id="SSF56281">
    <property type="entry name" value="Metallo-hydrolase/oxidoreductase"/>
    <property type="match status" value="1"/>
</dbReference>